<dbReference type="EMBL" id="BA000053">
    <property type="protein sequence ID" value="BAE61877.1"/>
    <property type="molecule type" value="Genomic_DNA"/>
</dbReference>
<dbReference type="RefSeq" id="XP_001823010.1">
    <property type="nucleotide sequence ID" value="XM_001822958.2"/>
</dbReference>
<dbReference type="SMR" id="Q2U988"/>
<dbReference type="STRING" id="510516.Q2U988"/>
<dbReference type="EnsemblFungi" id="BAE61877">
    <property type="protein sequence ID" value="BAE61877"/>
    <property type="gene ID" value="AO090701000129"/>
</dbReference>
<dbReference type="GeneID" id="5995067"/>
<dbReference type="KEGG" id="aor:AO090701000129"/>
<dbReference type="HOGENOM" id="CLU_034402_2_0_1"/>
<dbReference type="OMA" id="TFPDPNF"/>
<dbReference type="OrthoDB" id="78207at5052"/>
<dbReference type="Proteomes" id="UP000006564">
    <property type="component" value="Chromosome 5"/>
</dbReference>
<dbReference type="GO" id="GO:0005737">
    <property type="term" value="C:cytoplasm"/>
    <property type="evidence" value="ECO:0000250"/>
    <property type="project" value="UniProtKB"/>
</dbReference>
<dbReference type="GO" id="GO:0005524">
    <property type="term" value="F:ATP binding"/>
    <property type="evidence" value="ECO:0000250"/>
    <property type="project" value="UniProtKB"/>
</dbReference>
<dbReference type="GO" id="GO:0000287">
    <property type="term" value="F:magnesium ion binding"/>
    <property type="evidence" value="ECO:0000250"/>
    <property type="project" value="UniProtKB"/>
</dbReference>
<dbReference type="GO" id="GO:0044183">
    <property type="term" value="F:protein folding chaperone"/>
    <property type="evidence" value="ECO:0000250"/>
    <property type="project" value="UniProtKB"/>
</dbReference>
<dbReference type="GO" id="GO:1905143">
    <property type="term" value="P:eukaryotic translation initiation factor 2 complex assembly"/>
    <property type="evidence" value="ECO:0000250"/>
    <property type="project" value="UniProtKB"/>
</dbReference>
<dbReference type="InterPro" id="IPR009772">
    <property type="entry name" value="CDC123"/>
</dbReference>
<dbReference type="PANTHER" id="PTHR15323:SF6">
    <property type="entry name" value="CELL DIVISION CYCLE PROTEIN 123 HOMOLOG"/>
    <property type="match status" value="1"/>
</dbReference>
<dbReference type="PANTHER" id="PTHR15323">
    <property type="entry name" value="D123 PROTEIN"/>
    <property type="match status" value="1"/>
</dbReference>
<dbReference type="Pfam" id="PF07065">
    <property type="entry name" value="D123"/>
    <property type="match status" value="1"/>
</dbReference>
<keyword id="KW-0067">ATP-binding</keyword>
<keyword id="KW-0143">Chaperone</keyword>
<keyword id="KW-0963">Cytoplasm</keyword>
<keyword id="KW-0460">Magnesium</keyword>
<keyword id="KW-0479">Metal-binding</keyword>
<keyword id="KW-0547">Nucleotide-binding</keyword>
<keyword id="KW-1185">Reference proteome</keyword>
<feature type="chain" id="PRO_0000350938" description="Translation initiation factor eIF2 assembly protein">
    <location>
        <begin position="1"/>
        <end position="413"/>
    </location>
</feature>
<feature type="region of interest" description="Disordered" evidence="4">
    <location>
        <begin position="1"/>
        <end position="23"/>
    </location>
</feature>
<feature type="region of interest" description="Disordered" evidence="4">
    <location>
        <begin position="71"/>
        <end position="101"/>
    </location>
</feature>
<feature type="region of interest" description="Disordered" evidence="4">
    <location>
        <begin position="322"/>
        <end position="343"/>
    </location>
</feature>
<feature type="compositionally biased region" description="Acidic residues" evidence="4">
    <location>
        <begin position="79"/>
        <end position="101"/>
    </location>
</feature>
<feature type="compositionally biased region" description="Acidic residues" evidence="4">
    <location>
        <begin position="327"/>
        <end position="343"/>
    </location>
</feature>
<feature type="binding site" evidence="1">
    <location>
        <position position="123"/>
    </location>
    <ligand>
        <name>ATP</name>
        <dbReference type="ChEBI" id="CHEBI:30616"/>
    </ligand>
</feature>
<feature type="binding site" evidence="1">
    <location>
        <position position="126"/>
    </location>
    <ligand>
        <name>ATP</name>
        <dbReference type="ChEBI" id="CHEBI:30616"/>
    </ligand>
</feature>
<feature type="binding site" evidence="1">
    <location>
        <position position="128"/>
    </location>
    <ligand>
        <name>ATP</name>
        <dbReference type="ChEBI" id="CHEBI:30616"/>
    </ligand>
</feature>
<feature type="binding site" evidence="3">
    <location>
        <position position="130"/>
    </location>
    <ligand>
        <name>ATP</name>
        <dbReference type="ChEBI" id="CHEBI:30616"/>
    </ligand>
</feature>
<feature type="binding site" evidence="3">
    <location>
        <position position="190"/>
    </location>
    <ligand>
        <name>ATP</name>
        <dbReference type="ChEBI" id="CHEBI:30616"/>
    </ligand>
</feature>
<feature type="binding site" evidence="1">
    <location>
        <position position="191"/>
    </location>
    <ligand>
        <name>ATP</name>
        <dbReference type="ChEBI" id="CHEBI:30616"/>
    </ligand>
</feature>
<feature type="binding site" evidence="1">
    <location>
        <position position="200"/>
    </location>
    <ligand>
        <name>ATP</name>
        <dbReference type="ChEBI" id="CHEBI:30616"/>
    </ligand>
</feature>
<feature type="binding site" evidence="1">
    <location>
        <position position="202"/>
    </location>
    <ligand>
        <name>ATP</name>
        <dbReference type="ChEBI" id="CHEBI:30616"/>
    </ligand>
</feature>
<feature type="binding site" evidence="1">
    <location>
        <position position="216"/>
    </location>
    <ligand>
        <name>ATP</name>
        <dbReference type="ChEBI" id="CHEBI:30616"/>
    </ligand>
</feature>
<feature type="binding site" evidence="3">
    <location>
        <position position="255"/>
    </location>
    <ligand>
        <name>ATP</name>
        <dbReference type="ChEBI" id="CHEBI:30616"/>
    </ligand>
</feature>
<feature type="binding site" evidence="1">
    <location>
        <position position="269"/>
    </location>
    <ligand>
        <name>ATP</name>
        <dbReference type="ChEBI" id="CHEBI:30616"/>
    </ligand>
</feature>
<feature type="binding site" evidence="1">
    <location>
        <position position="269"/>
    </location>
    <ligand>
        <name>Mg(2+)</name>
        <dbReference type="ChEBI" id="CHEBI:18420"/>
    </ligand>
</feature>
<feature type="binding site" evidence="1">
    <location>
        <position position="271"/>
    </location>
    <ligand>
        <name>ATP</name>
        <dbReference type="ChEBI" id="CHEBI:30616"/>
    </ligand>
</feature>
<feature type="binding site" evidence="1">
    <location>
        <position position="271"/>
    </location>
    <ligand>
        <name>Mg(2+)</name>
        <dbReference type="ChEBI" id="CHEBI:18420"/>
    </ligand>
</feature>
<sequence length="413" mass="46822">MPHSDTEVPASAEASTDLPQRLPFPPVTHSHILHCSYHDWQPRYRALTPKSRLIPLTVPFISYLRADGIVLPPENATPTDDDNLDTYSDDEADEQPDPSTEWEEIHTQIKTTISELGGIITPKLNWSAPKDATWMAATNDMQCRTPNDIYLLLKSSDFISHDLELPFDDCVPDMPDSTTTPDVPYHLVLRKYVNFNPSLEFRCFVRDRVLLCICQRDQNHFDFLFPLRETLRSRIQAFFDEKLKDTFPDPSFVFDVYIPPPHQRVWLIDINPWAVRTDPLLFSWLEILNMKDPIGIQEEDGAEEQFVRLSLNGNTVTGVVGAAEGSESSDTEDESADDVDEDSPFFPEFRLVKRDDPEAYAFTTPQYSAHKLPKEVVDASISGPGGMSEFLGKWQDILAKQAQESDTDSDGGQ</sequence>
<protein>
    <recommendedName>
        <fullName evidence="5">Translation initiation factor eIF2 assembly protein</fullName>
    </recommendedName>
    <alternativeName>
        <fullName>Cell division cycle protein 123</fullName>
    </alternativeName>
</protein>
<evidence type="ECO:0000250" key="1">
    <source>
        <dbReference type="UniProtKB" id="O75794"/>
    </source>
</evidence>
<evidence type="ECO:0000250" key="2">
    <source>
        <dbReference type="UniProtKB" id="Q05791"/>
    </source>
</evidence>
<evidence type="ECO:0000250" key="3">
    <source>
        <dbReference type="UniProtKB" id="Q9P7N5"/>
    </source>
</evidence>
<evidence type="ECO:0000256" key="4">
    <source>
        <dbReference type="SAM" id="MobiDB-lite"/>
    </source>
</evidence>
<evidence type="ECO:0000305" key="5"/>
<accession>Q2U988</accession>
<gene>
    <name type="primary">cdc123</name>
    <name type="ORF">AO090701000129</name>
</gene>
<proteinExistence type="inferred from homology"/>
<name>CD123_ASPOR</name>
<comment type="function">
    <text evidence="2">ATP-dependent protein-folding chaperone for the eIF2 complex. Binds to the gamma subunit of the eIF2 complex which allows the subunit to assemble with the alpha and beta subunits.</text>
</comment>
<comment type="subcellular location">
    <subcellularLocation>
        <location evidence="2">Cytoplasm</location>
    </subcellularLocation>
</comment>
<comment type="similarity">
    <text evidence="5">Belongs to the CDC123 family.</text>
</comment>
<organism>
    <name type="scientific">Aspergillus oryzae (strain ATCC 42149 / RIB 40)</name>
    <name type="common">Yellow koji mold</name>
    <dbReference type="NCBI Taxonomy" id="510516"/>
    <lineage>
        <taxon>Eukaryota</taxon>
        <taxon>Fungi</taxon>
        <taxon>Dikarya</taxon>
        <taxon>Ascomycota</taxon>
        <taxon>Pezizomycotina</taxon>
        <taxon>Eurotiomycetes</taxon>
        <taxon>Eurotiomycetidae</taxon>
        <taxon>Eurotiales</taxon>
        <taxon>Aspergillaceae</taxon>
        <taxon>Aspergillus</taxon>
        <taxon>Aspergillus subgen. Circumdati</taxon>
    </lineage>
</organism>
<reference key="1">
    <citation type="journal article" date="2005" name="Nature">
        <title>Genome sequencing and analysis of Aspergillus oryzae.</title>
        <authorList>
            <person name="Machida M."/>
            <person name="Asai K."/>
            <person name="Sano M."/>
            <person name="Tanaka T."/>
            <person name="Kumagai T."/>
            <person name="Terai G."/>
            <person name="Kusumoto K."/>
            <person name="Arima T."/>
            <person name="Akita O."/>
            <person name="Kashiwagi Y."/>
            <person name="Abe K."/>
            <person name="Gomi K."/>
            <person name="Horiuchi H."/>
            <person name="Kitamoto K."/>
            <person name="Kobayashi T."/>
            <person name="Takeuchi M."/>
            <person name="Denning D.W."/>
            <person name="Galagan J.E."/>
            <person name="Nierman W.C."/>
            <person name="Yu J."/>
            <person name="Archer D.B."/>
            <person name="Bennett J.W."/>
            <person name="Bhatnagar D."/>
            <person name="Cleveland T.E."/>
            <person name="Fedorova N.D."/>
            <person name="Gotoh O."/>
            <person name="Horikawa H."/>
            <person name="Hosoyama A."/>
            <person name="Ichinomiya M."/>
            <person name="Igarashi R."/>
            <person name="Iwashita K."/>
            <person name="Juvvadi P.R."/>
            <person name="Kato M."/>
            <person name="Kato Y."/>
            <person name="Kin T."/>
            <person name="Kokubun A."/>
            <person name="Maeda H."/>
            <person name="Maeyama N."/>
            <person name="Maruyama J."/>
            <person name="Nagasaki H."/>
            <person name="Nakajima T."/>
            <person name="Oda K."/>
            <person name="Okada K."/>
            <person name="Paulsen I."/>
            <person name="Sakamoto K."/>
            <person name="Sawano T."/>
            <person name="Takahashi M."/>
            <person name="Takase K."/>
            <person name="Terabayashi Y."/>
            <person name="Wortman J.R."/>
            <person name="Yamada O."/>
            <person name="Yamagata Y."/>
            <person name="Anazawa H."/>
            <person name="Hata Y."/>
            <person name="Koide Y."/>
            <person name="Komori T."/>
            <person name="Koyama Y."/>
            <person name="Minetoki T."/>
            <person name="Suharnan S."/>
            <person name="Tanaka A."/>
            <person name="Isono K."/>
            <person name="Kuhara S."/>
            <person name="Ogasawara N."/>
            <person name="Kikuchi H."/>
        </authorList>
    </citation>
    <scope>NUCLEOTIDE SEQUENCE [LARGE SCALE GENOMIC DNA]</scope>
    <source>
        <strain>ATCC 42149 / RIB 40</strain>
    </source>
</reference>